<sequence>MLKKQDAIVLKSIDYGETNKIVTLFTKEDGKLAVLAKGAKKPNSRFAAVTQPFVYGSYLYFQGNGLPSLSQGEAVDSFKELQFDIVKSAYAAYITELVDKLTEERKPTFFLFDWLLLALRQINTGQDAEIIARIMDMKMLPLAGAKPELDCCACCRSETRDPVAFSVAYAGFLCSNCIHKDERAFPITLPFAKLFRVLYYVDLTKVGTISVKAETKRRLEWMIRTYYDEYVGVQLKARRFISQLDKMGGLSSDVDK</sequence>
<reference key="1">
    <citation type="submission" date="2003-10" db="EMBL/GenBank/DDBJ databases">
        <title>The complete genome sequence of the alkaliphilic Bacillus clausii KSM-K16.</title>
        <authorList>
            <person name="Takaki Y."/>
            <person name="Kageyama Y."/>
            <person name="Shimamura S."/>
            <person name="Suzuki H."/>
            <person name="Nishi S."/>
            <person name="Hatada Y."/>
            <person name="Kawai S."/>
            <person name="Ito S."/>
            <person name="Horikoshi K."/>
        </authorList>
    </citation>
    <scope>NUCLEOTIDE SEQUENCE [LARGE SCALE GENOMIC DNA]</scope>
    <source>
        <strain>KSM-K16</strain>
    </source>
</reference>
<accession>Q5WHD7</accession>
<dbReference type="EMBL" id="AP006627">
    <property type="protein sequence ID" value="BAD64218.1"/>
    <property type="molecule type" value="Genomic_DNA"/>
</dbReference>
<dbReference type="RefSeq" id="WP_011246527.1">
    <property type="nucleotide sequence ID" value="NC_006582.1"/>
</dbReference>
<dbReference type="SMR" id="Q5WHD7"/>
<dbReference type="STRING" id="66692.ABC1683"/>
<dbReference type="KEGG" id="bcl:ABC1683"/>
<dbReference type="eggNOG" id="COG1381">
    <property type="taxonomic scope" value="Bacteria"/>
</dbReference>
<dbReference type="HOGENOM" id="CLU_066632_4_0_9"/>
<dbReference type="OrthoDB" id="9797083at2"/>
<dbReference type="Proteomes" id="UP000001168">
    <property type="component" value="Chromosome"/>
</dbReference>
<dbReference type="GO" id="GO:0043590">
    <property type="term" value="C:bacterial nucleoid"/>
    <property type="evidence" value="ECO:0007669"/>
    <property type="project" value="TreeGrafter"/>
</dbReference>
<dbReference type="GO" id="GO:0006310">
    <property type="term" value="P:DNA recombination"/>
    <property type="evidence" value="ECO:0007669"/>
    <property type="project" value="UniProtKB-UniRule"/>
</dbReference>
<dbReference type="GO" id="GO:0006302">
    <property type="term" value="P:double-strand break repair"/>
    <property type="evidence" value="ECO:0007669"/>
    <property type="project" value="TreeGrafter"/>
</dbReference>
<dbReference type="Gene3D" id="2.40.50.140">
    <property type="entry name" value="Nucleic acid-binding proteins"/>
    <property type="match status" value="1"/>
</dbReference>
<dbReference type="Gene3D" id="1.20.1440.120">
    <property type="entry name" value="Recombination protein O, C-terminal domain"/>
    <property type="match status" value="1"/>
</dbReference>
<dbReference type="HAMAP" id="MF_00201">
    <property type="entry name" value="RecO"/>
    <property type="match status" value="1"/>
</dbReference>
<dbReference type="InterPro" id="IPR037278">
    <property type="entry name" value="ARFGAP/RecO"/>
</dbReference>
<dbReference type="InterPro" id="IPR022572">
    <property type="entry name" value="DNA_rep/recomb_RecO_N"/>
</dbReference>
<dbReference type="InterPro" id="IPR012340">
    <property type="entry name" value="NA-bd_OB-fold"/>
</dbReference>
<dbReference type="InterPro" id="IPR003717">
    <property type="entry name" value="RecO"/>
</dbReference>
<dbReference type="InterPro" id="IPR042242">
    <property type="entry name" value="RecO_C"/>
</dbReference>
<dbReference type="NCBIfam" id="TIGR00613">
    <property type="entry name" value="reco"/>
    <property type="match status" value="1"/>
</dbReference>
<dbReference type="PANTHER" id="PTHR33991">
    <property type="entry name" value="DNA REPAIR PROTEIN RECO"/>
    <property type="match status" value="1"/>
</dbReference>
<dbReference type="PANTHER" id="PTHR33991:SF1">
    <property type="entry name" value="DNA REPAIR PROTEIN RECO"/>
    <property type="match status" value="1"/>
</dbReference>
<dbReference type="Pfam" id="PF02565">
    <property type="entry name" value="RecO_C"/>
    <property type="match status" value="1"/>
</dbReference>
<dbReference type="Pfam" id="PF11967">
    <property type="entry name" value="RecO_N"/>
    <property type="match status" value="1"/>
</dbReference>
<dbReference type="SUPFAM" id="SSF57863">
    <property type="entry name" value="ArfGap/RecO-like zinc finger"/>
    <property type="match status" value="1"/>
</dbReference>
<dbReference type="SUPFAM" id="SSF50249">
    <property type="entry name" value="Nucleic acid-binding proteins"/>
    <property type="match status" value="1"/>
</dbReference>
<feature type="chain" id="PRO_0000204931" description="DNA repair protein RecO">
    <location>
        <begin position="1"/>
        <end position="256"/>
    </location>
</feature>
<protein>
    <recommendedName>
        <fullName evidence="1">DNA repair protein RecO</fullName>
    </recommendedName>
    <alternativeName>
        <fullName evidence="1">Recombination protein O</fullName>
    </alternativeName>
</protein>
<name>RECO_SHOC1</name>
<gene>
    <name evidence="1" type="primary">recO</name>
    <name type="ordered locus">ABC1683</name>
</gene>
<proteinExistence type="inferred from homology"/>
<organism>
    <name type="scientific">Shouchella clausii (strain KSM-K16)</name>
    <name type="common">Alkalihalobacillus clausii</name>
    <dbReference type="NCBI Taxonomy" id="66692"/>
    <lineage>
        <taxon>Bacteria</taxon>
        <taxon>Bacillati</taxon>
        <taxon>Bacillota</taxon>
        <taxon>Bacilli</taxon>
        <taxon>Bacillales</taxon>
        <taxon>Bacillaceae</taxon>
        <taxon>Shouchella</taxon>
    </lineage>
</organism>
<comment type="function">
    <text evidence="1">Involved in DNA repair and RecF pathway recombination.</text>
</comment>
<comment type="similarity">
    <text evidence="1">Belongs to the RecO family.</text>
</comment>
<evidence type="ECO:0000255" key="1">
    <source>
        <dbReference type="HAMAP-Rule" id="MF_00201"/>
    </source>
</evidence>
<keyword id="KW-0227">DNA damage</keyword>
<keyword id="KW-0233">DNA recombination</keyword>
<keyword id="KW-0234">DNA repair</keyword>
<keyword id="KW-1185">Reference proteome</keyword>